<keyword id="KW-0106">Calcium</keyword>
<keyword id="KW-0130">Cell adhesion</keyword>
<keyword id="KW-1003">Cell membrane</keyword>
<keyword id="KW-0165">Cleavage on pair of basic residues</keyword>
<keyword id="KW-0325">Glycoprotein</keyword>
<keyword id="KW-0472">Membrane</keyword>
<keyword id="KW-0479">Metal-binding</keyword>
<keyword id="KW-1185">Reference proteome</keyword>
<keyword id="KW-0677">Repeat</keyword>
<keyword id="KW-0732">Signal</keyword>
<keyword id="KW-0812">Transmembrane</keyword>
<keyword id="KW-1133">Transmembrane helix</keyword>
<proteinExistence type="evidence at protein level"/>
<reference key="1">
    <citation type="submission" date="1998-06" db="EMBL/GenBank/DDBJ databases">
        <authorList>
            <person name="Link D."/>
        </authorList>
    </citation>
    <scope>NUCLEOTIDE SEQUENCE [MRNA]</scope>
    <source>
        <strain>C3H/HeJ</strain>
        <tissue>Muscle</tissue>
    </source>
</reference>
<reference key="2">
    <citation type="journal article" date="2004" name="Genome Res.">
        <title>The status, quality, and expansion of the NIH full-length cDNA project: the Mammalian Gene Collection (MGC).</title>
        <authorList>
            <consortium name="The MGC Project Team"/>
        </authorList>
    </citation>
    <scope>NUCLEOTIDE SEQUENCE [LARGE SCALE MRNA]</scope>
    <source>
        <tissue>Brain</tissue>
    </source>
</reference>
<reference key="3">
    <citation type="journal article" date="1991" name="Proc. Natl. Acad. Sci. U.S.A.">
        <title>Expression of M-cadherin, a member of the cadherin multigene family, correlates with differentiation of skeletal muscle cells.</title>
        <authorList>
            <person name="Donalies M."/>
            <person name="Cramer M."/>
            <person name="Ringwald M."/>
            <person name="Starzinski-Powitz A."/>
        </authorList>
    </citation>
    <scope>NUCLEOTIDE SEQUENCE [MRNA]</scope>
    <source>
        <tissue>Muscle</tissue>
    </source>
</reference>
<reference key="4">
    <citation type="journal article" date="1999" name="Genomics">
        <title>Identification of imprinted loci by methylation-sensitive representational difference analysis: application to mouse distal chromosome 2.</title>
        <authorList>
            <person name="Kelsey G."/>
            <person name="Bodle D."/>
            <person name="Miller H.J."/>
            <person name="Beechey C.V."/>
            <person name="Coombes C."/>
            <person name="Peters J."/>
            <person name="Williamson C.M."/>
        </authorList>
    </citation>
    <scope>NUCLEOTIDE SEQUENCE [GENOMIC DNA] OF 539-617</scope>
</reference>
<reference key="5">
    <citation type="journal article" date="2009" name="Mol. Cell. Proteomics">
        <title>The mouse C2C12 myoblast cell surface N-linked glycoproteome: identification, glycosite occupancy, and membrane orientation.</title>
        <authorList>
            <person name="Gundry R.L."/>
            <person name="Raginski K."/>
            <person name="Tarasova Y."/>
            <person name="Tchernyshyov I."/>
            <person name="Bausch-Fluck D."/>
            <person name="Elliott S.T."/>
            <person name="Boheler K.R."/>
            <person name="Van Eyk J.E."/>
            <person name="Wollscheid B."/>
        </authorList>
    </citation>
    <scope>GLYCOSYLATION [LARGE SCALE ANALYSIS] AT ASN-106 AND ASN-537</scope>
    <source>
        <tissue>Myoblast</tissue>
    </source>
</reference>
<organism>
    <name type="scientific">Mus musculus</name>
    <name type="common">Mouse</name>
    <dbReference type="NCBI Taxonomy" id="10090"/>
    <lineage>
        <taxon>Eukaryota</taxon>
        <taxon>Metazoa</taxon>
        <taxon>Chordata</taxon>
        <taxon>Craniata</taxon>
        <taxon>Vertebrata</taxon>
        <taxon>Euteleostomi</taxon>
        <taxon>Mammalia</taxon>
        <taxon>Eutheria</taxon>
        <taxon>Euarchontoglires</taxon>
        <taxon>Glires</taxon>
        <taxon>Rodentia</taxon>
        <taxon>Myomorpha</taxon>
        <taxon>Muroidea</taxon>
        <taxon>Muridae</taxon>
        <taxon>Murinae</taxon>
        <taxon>Mus</taxon>
        <taxon>Mus</taxon>
    </lineage>
</organism>
<comment type="function">
    <text>Cadherins are calcium-dependent cell adhesion proteins. They preferentially interact with themselves in a homophilic manner in connecting cells; cadherins may thus contribute to the sorting of heterogeneous cell types. M-cadherin is part of the myogenic program and may provide a trigger for terminal muscle differentiation.</text>
</comment>
<comment type="subcellular location">
    <subcellularLocation>
        <location>Cell membrane</location>
        <topology>Single-pass type I membrane protein</topology>
    </subcellularLocation>
</comment>
<comment type="tissue specificity">
    <text>Skeletal muscle.</text>
</comment>
<comment type="domain">
    <text evidence="1">Three calcium ions are usually bound at the interface of each cadherin domain and rigidify the connections, imparting a strong curvature to the full-length ectodomain.</text>
</comment>
<dbReference type="EMBL" id="BC157978">
    <property type="protein sequence ID" value="AAI57979.1"/>
    <property type="molecule type" value="mRNA"/>
</dbReference>
<dbReference type="EMBL" id="M74541">
    <property type="protein sequence ID" value="AAC23585.1"/>
    <property type="molecule type" value="mRNA"/>
</dbReference>
<dbReference type="EMBL" id="AJ245402">
    <property type="protein sequence ID" value="CAB57281.2"/>
    <property type="molecule type" value="Genomic_DNA"/>
</dbReference>
<dbReference type="CCDS" id="CCDS22746.1"/>
<dbReference type="PIR" id="A40986">
    <property type="entry name" value="IJMSCM"/>
</dbReference>
<dbReference type="RefSeq" id="NP_031688.2">
    <property type="nucleotide sequence ID" value="NM_007662.2"/>
</dbReference>
<dbReference type="SMR" id="P33146"/>
<dbReference type="BioGRID" id="198634">
    <property type="interactions" value="2"/>
</dbReference>
<dbReference type="FunCoup" id="P33146">
    <property type="interactions" value="184"/>
</dbReference>
<dbReference type="STRING" id="10090.ENSMUSP00000034443"/>
<dbReference type="GlyConnect" id="2167">
    <property type="glycosylation" value="1 N-Linked glycan (1 site)"/>
</dbReference>
<dbReference type="GlyCosmos" id="P33146">
    <property type="glycosylation" value="5 sites, 1 glycan"/>
</dbReference>
<dbReference type="GlyGen" id="P33146">
    <property type="glycosylation" value="5 sites, 5 N-linked glycans (4 sites)"/>
</dbReference>
<dbReference type="iPTMnet" id="P33146"/>
<dbReference type="PhosphoSitePlus" id="P33146"/>
<dbReference type="PaxDb" id="10090-ENSMUSP00000034443"/>
<dbReference type="PeptideAtlas" id="P33146"/>
<dbReference type="ProteomicsDB" id="281741"/>
<dbReference type="Antibodypedia" id="2417">
    <property type="antibodies" value="316 antibodies from 36 providers"/>
</dbReference>
<dbReference type="DNASU" id="12555"/>
<dbReference type="Ensembl" id="ENSMUST00000034443.7">
    <property type="protein sequence ID" value="ENSMUSP00000034443.6"/>
    <property type="gene ID" value="ENSMUSG00000031962.7"/>
</dbReference>
<dbReference type="GeneID" id="12555"/>
<dbReference type="KEGG" id="mmu:12555"/>
<dbReference type="UCSC" id="uc009ntv.1">
    <property type="organism name" value="mouse"/>
</dbReference>
<dbReference type="AGR" id="MGI:106672"/>
<dbReference type="CTD" id="1013"/>
<dbReference type="MGI" id="MGI:106672">
    <property type="gene designation" value="Cdh15"/>
</dbReference>
<dbReference type="VEuPathDB" id="HostDB:ENSMUSG00000031962"/>
<dbReference type="eggNOG" id="KOG3594">
    <property type="taxonomic scope" value="Eukaryota"/>
</dbReference>
<dbReference type="GeneTree" id="ENSGT00940000160118"/>
<dbReference type="HOGENOM" id="CLU_005284_2_0_1"/>
<dbReference type="InParanoid" id="P33146"/>
<dbReference type="OMA" id="NACGRRH"/>
<dbReference type="OrthoDB" id="6079678at2759"/>
<dbReference type="PhylomeDB" id="P33146"/>
<dbReference type="TreeFam" id="TF316817"/>
<dbReference type="Reactome" id="R-MMU-418990">
    <property type="pathway name" value="Adherens junctions interactions"/>
</dbReference>
<dbReference type="Reactome" id="R-MMU-525793">
    <property type="pathway name" value="Myogenesis"/>
</dbReference>
<dbReference type="BioGRID-ORCS" id="12555">
    <property type="hits" value="2 hits in 80 CRISPR screens"/>
</dbReference>
<dbReference type="PRO" id="PR:P33146"/>
<dbReference type="Proteomes" id="UP000000589">
    <property type="component" value="Chromosome 8"/>
</dbReference>
<dbReference type="RNAct" id="P33146">
    <property type="molecule type" value="protein"/>
</dbReference>
<dbReference type="Bgee" id="ENSMUSG00000031962">
    <property type="expression patterns" value="Expressed in myotome and 89 other cell types or tissues"/>
</dbReference>
<dbReference type="GO" id="GO:0005901">
    <property type="term" value="C:caveola"/>
    <property type="evidence" value="ECO:0000314"/>
    <property type="project" value="MGI"/>
</dbReference>
<dbReference type="GO" id="GO:0005794">
    <property type="term" value="C:Golgi apparatus"/>
    <property type="evidence" value="ECO:0007669"/>
    <property type="project" value="Ensembl"/>
</dbReference>
<dbReference type="GO" id="GO:0031594">
    <property type="term" value="C:neuromuscular junction"/>
    <property type="evidence" value="ECO:0000314"/>
    <property type="project" value="MGI"/>
</dbReference>
<dbReference type="GO" id="GO:0005509">
    <property type="term" value="F:calcium ion binding"/>
    <property type="evidence" value="ECO:0007669"/>
    <property type="project" value="InterPro"/>
</dbReference>
<dbReference type="GO" id="GO:0007156">
    <property type="term" value="P:homophilic cell adhesion via plasma membrane adhesion molecules"/>
    <property type="evidence" value="ECO:0007669"/>
    <property type="project" value="InterPro"/>
</dbReference>
<dbReference type="CDD" id="cd11304">
    <property type="entry name" value="Cadherin_repeat"/>
    <property type="match status" value="4"/>
</dbReference>
<dbReference type="FunFam" id="2.60.40.60:FF:000011">
    <property type="entry name" value="Cadherin 1"/>
    <property type="match status" value="1"/>
</dbReference>
<dbReference type="FunFam" id="2.60.40.60:FF:000229">
    <property type="entry name" value="Cadherin 15"/>
    <property type="match status" value="1"/>
</dbReference>
<dbReference type="FunFam" id="2.60.40.60:FF:000019">
    <property type="entry name" value="Cadherin 2"/>
    <property type="match status" value="1"/>
</dbReference>
<dbReference type="FunFam" id="2.60.40.60:FF:000022">
    <property type="entry name" value="Cadherin 2"/>
    <property type="match status" value="1"/>
</dbReference>
<dbReference type="FunFam" id="4.10.900.10:FF:000001">
    <property type="entry name" value="Cadherin 2"/>
    <property type="match status" value="1"/>
</dbReference>
<dbReference type="FunFam" id="2.60.40.60:FF:000074">
    <property type="entry name" value="Desmoglein 4"/>
    <property type="match status" value="1"/>
</dbReference>
<dbReference type="Gene3D" id="2.60.40.60">
    <property type="entry name" value="Cadherins"/>
    <property type="match status" value="5"/>
</dbReference>
<dbReference type="Gene3D" id="4.10.900.10">
    <property type="entry name" value="TCF3-CBD (Catenin binding domain)"/>
    <property type="match status" value="1"/>
</dbReference>
<dbReference type="InterPro" id="IPR039808">
    <property type="entry name" value="Cadherin"/>
</dbReference>
<dbReference type="InterPro" id="IPR002126">
    <property type="entry name" value="Cadherin-like_dom"/>
</dbReference>
<dbReference type="InterPro" id="IPR015919">
    <property type="entry name" value="Cadherin-like_sf"/>
</dbReference>
<dbReference type="InterPro" id="IPR020894">
    <property type="entry name" value="Cadherin_CS"/>
</dbReference>
<dbReference type="InterPro" id="IPR000233">
    <property type="entry name" value="Cadherin_Y-type_LIR"/>
</dbReference>
<dbReference type="InterPro" id="IPR027397">
    <property type="entry name" value="Catenin-bd_sf"/>
</dbReference>
<dbReference type="PANTHER" id="PTHR24027:SF300">
    <property type="entry name" value="CADHERIN-15"/>
    <property type="match status" value="1"/>
</dbReference>
<dbReference type="PANTHER" id="PTHR24027">
    <property type="entry name" value="CADHERIN-23"/>
    <property type="match status" value="1"/>
</dbReference>
<dbReference type="Pfam" id="PF01049">
    <property type="entry name" value="CADH_Y-type_LIR"/>
    <property type="match status" value="1"/>
</dbReference>
<dbReference type="Pfam" id="PF00028">
    <property type="entry name" value="Cadherin"/>
    <property type="match status" value="5"/>
</dbReference>
<dbReference type="PRINTS" id="PR00205">
    <property type="entry name" value="CADHERIN"/>
</dbReference>
<dbReference type="SMART" id="SM00112">
    <property type="entry name" value="CA"/>
    <property type="match status" value="4"/>
</dbReference>
<dbReference type="SUPFAM" id="SSF49313">
    <property type="entry name" value="Cadherin-like"/>
    <property type="match status" value="5"/>
</dbReference>
<dbReference type="PROSITE" id="PS00232">
    <property type="entry name" value="CADHERIN_1"/>
    <property type="match status" value="2"/>
</dbReference>
<dbReference type="PROSITE" id="PS50268">
    <property type="entry name" value="CADHERIN_2"/>
    <property type="match status" value="5"/>
</dbReference>
<name>CAD15_MOUSE</name>
<gene>
    <name type="primary">Cdh15</name>
    <name type="synonym">Cdh14</name>
</gene>
<evidence type="ECO:0000250" key="1"/>
<evidence type="ECO:0000255" key="2"/>
<evidence type="ECO:0000255" key="3">
    <source>
        <dbReference type="PROSITE-ProRule" id="PRU00043"/>
    </source>
</evidence>
<evidence type="ECO:0000256" key="4">
    <source>
        <dbReference type="SAM" id="MobiDB-lite"/>
    </source>
</evidence>
<evidence type="ECO:0000269" key="5">
    <source>
    </source>
</evidence>
<evidence type="ECO:0000305" key="6"/>
<feature type="signal peptide" evidence="2">
    <location>
        <begin position="1"/>
        <end position="21"/>
    </location>
</feature>
<feature type="propeptide" id="PRO_0000003807" evidence="2">
    <location>
        <begin position="22"/>
        <end position="59"/>
    </location>
</feature>
<feature type="chain" id="PRO_0000003808" description="Cadherin-15">
    <location>
        <begin position="60"/>
        <end position="784"/>
    </location>
</feature>
<feature type="topological domain" description="Extracellular" evidence="2">
    <location>
        <begin position="60"/>
        <end position="605"/>
    </location>
</feature>
<feature type="transmembrane region" description="Helical" evidence="2">
    <location>
        <begin position="606"/>
        <end position="625"/>
    </location>
</feature>
<feature type="topological domain" description="Cytoplasmic" evidence="2">
    <location>
        <begin position="626"/>
        <end position="784"/>
    </location>
</feature>
<feature type="domain" description="Cadherin 1" evidence="3">
    <location>
        <begin position="60"/>
        <end position="151"/>
    </location>
</feature>
<feature type="domain" description="Cadherin 2" evidence="3">
    <location>
        <begin position="152"/>
        <end position="259"/>
    </location>
</feature>
<feature type="domain" description="Cadherin 3" evidence="3">
    <location>
        <begin position="260"/>
        <end position="374"/>
    </location>
</feature>
<feature type="domain" description="Cadherin 4" evidence="3">
    <location>
        <begin position="375"/>
        <end position="480"/>
    </location>
</feature>
<feature type="domain" description="Cadherin 5" evidence="3">
    <location>
        <begin position="481"/>
        <end position="589"/>
    </location>
</feature>
<feature type="region of interest" description="Disordered" evidence="4">
    <location>
        <begin position="676"/>
        <end position="700"/>
    </location>
</feature>
<feature type="glycosylation site" description="N-linked (GlcNAc...) asparagine" evidence="5">
    <location>
        <position position="106"/>
    </location>
</feature>
<feature type="glycosylation site" description="N-linked (GlcNAc...) asparagine" evidence="2">
    <location>
        <position position="226"/>
    </location>
</feature>
<feature type="glycosylation site" description="N-linked (GlcNAc...) asparagine" evidence="2">
    <location>
        <position position="530"/>
    </location>
</feature>
<feature type="glycosylation site" description="N-linked (GlcNAc...) asparagine" evidence="5">
    <location>
        <position position="537"/>
    </location>
</feature>
<feature type="glycosylation site" description="N-linked (GlcNAc...) asparagine" evidence="2">
    <location>
        <position position="575"/>
    </location>
</feature>
<feature type="sequence conflict" description="In Ref. 3; AAC23585." evidence="6" ref="3">
    <original>K</original>
    <variation>E</variation>
    <location>
        <position position="26"/>
    </location>
</feature>
<feature type="sequence conflict" description="In Ref. 3; AAC23585." evidence="6" ref="3">
    <original>R</original>
    <variation>H</variation>
    <location>
        <position position="159"/>
    </location>
</feature>
<feature type="sequence conflict" description="In Ref. 3; AAC23585." evidence="6" ref="3">
    <original>L</original>
    <variation>F</variation>
    <location>
        <position position="622"/>
    </location>
</feature>
<protein>
    <recommendedName>
        <fullName>Cadherin-15</fullName>
    </recommendedName>
    <alternativeName>
        <fullName>Cadherin-14</fullName>
    </alternativeName>
    <alternativeName>
        <fullName>Muscle cadherin</fullName>
        <shortName>M-cadherin</shortName>
    </alternativeName>
</protein>
<sequence>MGSALLLALGLLAQSLGLSWAVPEPKPSTLYPWRRASAPGRVRRAWVIPPISVSENHKRLPYPLVQIKSDKQQLGSVIYSIQGPGVDEEPRNVFSIDKFTGRVYLNATLDREKTDRFRLRAFALDLGGSTLEDPTDLEIVVVDQNDNRPAFLQDVFRGRILEGAIPGTFVTRAEATDADDPETDNAALRFSILEQGSPEFFSIDEHTGEIRTVQVGLDREVVAVYNLTLQVADMSGDGLTATASAIISIDDINDNAPEFTKDEFFMEAAEAVSGVDVGRLEVEDKDLPGSPNWVARFTILEGDPDGQFKIYTDPKTNEGVLSVVKPLDYESREQYELRVSVQNEAPLQAAAPRARRGQTRVSVWVQDTNEAPVFPENPLRTSIAEGAPPGTSVATFSARDPDTEQLQRISYSKDYDPEDWLQVDGATGRIQTQRVLSPASPFLKDGWYRAIILALDNAIPPSTATGTLSIEILEVNDHAPALALPPSGSLCSEPDQGPGLLLGATDEDLPPHGAPFHFQLNPRVPDLGRNWSVSQINVSHARLRLRHQVSEGLHRLSLLLQDSGEPPQQREQTLNVTVCRCGSDGTCLPGAAALRGGGVGVSLGALVIVLASTVVLLVLILLAALRTRFRGHSRGKSLLHGLQEDLRDNILNYDEQGGGEEDQDAYDINQLRHPVEPRATSRSLGRPPLRRDAPFSYVPQPHRVLPTSPSDIANFISDGLEAADSDPSVPPYDTALIYDYEGDGSVAGTLSSILSSLGDEDQDYDYLRDWGPRFARLADMYGHQ</sequence>
<accession>P33146</accession>
<accession>B2RXU1</accession>
<accession>Q9QYZ7</accession>